<comment type="function">
    <text evidence="1">Core component of the SMC5-SMC6 complex, a complex involved in repair of DNA double-strand breaks by homologous recombination. The complex may promote sister chromatid homologous recombination by recruiting the SMC1-SMC3 cohesin complex to double-strand breaks. The complex is required for telomere maintenance via recombination and mediates sumoylation of shelterin complex (telosome) components. Required for sister chromatid cohesion during prometaphase and mitotic progression; the function seems to be independent of SMC6 (By similarity).</text>
</comment>
<comment type="subunit">
    <text evidence="1">Forms a heterodimer with smc6. Component of the SMC5-SMC6 complex which consists at least of smc5, smc6, nsmce2, nsmce1 and nsmce4a (By similarity).</text>
</comment>
<comment type="subcellular location">
    <subcellularLocation>
        <location>Nucleus</location>
    </subcellularLocation>
    <subcellularLocation>
        <location evidence="1">Chromosome</location>
    </subcellularLocation>
    <subcellularLocation>
        <location evidence="1">Chromosome</location>
        <location evidence="1">Telomere</location>
    </subcellularLocation>
    <text evidence="1">Associates with chromatin.</text>
</comment>
<comment type="developmental stage">
    <text evidence="3">Loaded onto chromatin during DNA replication in a manner dependent on the initiation of DNA synthesis, and it dissociated from chromatin during mitosis. Chromatin loading is not induced by DNA double-strand breaks.</text>
</comment>
<comment type="domain">
    <text evidence="1">The flexible hinge domain, which separates the large intramolecular coiled coil regions, allows the heterotypic interaction with the corresponding domain of SMC6, forming a V-shaped heterodimer.</text>
</comment>
<comment type="similarity">
    <text evidence="4">Belongs to the SMC family. SMC5 subfamily.</text>
</comment>
<dbReference type="EMBL" id="AB103030">
    <property type="protein sequence ID" value="BAC56936.1"/>
    <property type="molecule type" value="mRNA"/>
</dbReference>
<dbReference type="RefSeq" id="NP_001082472.1">
    <property type="nucleotide sequence ID" value="NM_001089003.1"/>
</dbReference>
<dbReference type="BioGRID" id="99824">
    <property type="interactions" value="1"/>
</dbReference>
<dbReference type="IntAct" id="Q805A1">
    <property type="interactions" value="1"/>
</dbReference>
<dbReference type="GeneID" id="398492"/>
<dbReference type="KEGG" id="xla:398492"/>
<dbReference type="AGR" id="Xenbase:XB-GENE-953075"/>
<dbReference type="CTD" id="398492"/>
<dbReference type="Xenbase" id="XB-GENE-953075">
    <property type="gene designation" value="smc5.S"/>
</dbReference>
<dbReference type="OrthoDB" id="10254973at2759"/>
<dbReference type="Proteomes" id="UP000186698">
    <property type="component" value="Chromosome 1S"/>
</dbReference>
<dbReference type="Bgee" id="398492">
    <property type="expression patterns" value="Expressed in ovary and 19 other cell types or tissues"/>
</dbReference>
<dbReference type="GO" id="GO:0000781">
    <property type="term" value="C:chromosome, telomeric region"/>
    <property type="evidence" value="ECO:0000250"/>
    <property type="project" value="UniProtKB"/>
</dbReference>
<dbReference type="GO" id="GO:0005634">
    <property type="term" value="C:nucleus"/>
    <property type="evidence" value="ECO:0000250"/>
    <property type="project" value="UniProtKB"/>
</dbReference>
<dbReference type="GO" id="GO:0016605">
    <property type="term" value="C:PML body"/>
    <property type="evidence" value="ECO:0000250"/>
    <property type="project" value="UniProtKB"/>
</dbReference>
<dbReference type="GO" id="GO:0030915">
    <property type="term" value="C:Smc5-Smc6 complex"/>
    <property type="evidence" value="ECO:0000250"/>
    <property type="project" value="UniProtKB"/>
</dbReference>
<dbReference type="GO" id="GO:0005524">
    <property type="term" value="F:ATP binding"/>
    <property type="evidence" value="ECO:0007669"/>
    <property type="project" value="UniProtKB-KW"/>
</dbReference>
<dbReference type="GO" id="GO:0016887">
    <property type="term" value="F:ATP hydrolysis activity"/>
    <property type="evidence" value="ECO:0007669"/>
    <property type="project" value="InterPro"/>
</dbReference>
<dbReference type="GO" id="GO:0003697">
    <property type="term" value="F:single-stranded DNA binding"/>
    <property type="evidence" value="ECO:0000318"/>
    <property type="project" value="GO_Central"/>
</dbReference>
<dbReference type="GO" id="GO:0051301">
    <property type="term" value="P:cell division"/>
    <property type="evidence" value="ECO:0007669"/>
    <property type="project" value="UniProtKB-KW"/>
</dbReference>
<dbReference type="GO" id="GO:0090398">
    <property type="term" value="P:cellular senescence"/>
    <property type="evidence" value="ECO:0000250"/>
    <property type="project" value="UniProtKB"/>
</dbReference>
<dbReference type="GO" id="GO:0000724">
    <property type="term" value="P:double-strand break repair via homologous recombination"/>
    <property type="evidence" value="ECO:0000250"/>
    <property type="project" value="UniProtKB"/>
</dbReference>
<dbReference type="GO" id="GO:0034184">
    <property type="term" value="P:positive regulation of maintenance of mitotic sister chromatid cohesion"/>
    <property type="evidence" value="ECO:0000250"/>
    <property type="project" value="UniProtKB"/>
</dbReference>
<dbReference type="GO" id="GO:0000722">
    <property type="term" value="P:telomere maintenance via recombination"/>
    <property type="evidence" value="ECO:0000250"/>
    <property type="project" value="UniProtKB"/>
</dbReference>
<dbReference type="FunFam" id="3.40.50.300:FF:001301">
    <property type="entry name" value="Structural maintenance of chromosomes 5"/>
    <property type="match status" value="1"/>
</dbReference>
<dbReference type="FunFam" id="3.40.50.300:FF:000793">
    <property type="entry name" value="Structural maintenance of chromosomes protein 5"/>
    <property type="match status" value="1"/>
</dbReference>
<dbReference type="Gene3D" id="3.40.50.300">
    <property type="entry name" value="P-loop containing nucleotide triphosphate hydrolases"/>
    <property type="match status" value="2"/>
</dbReference>
<dbReference type="InterPro" id="IPR027417">
    <property type="entry name" value="P-loop_NTPase"/>
</dbReference>
<dbReference type="InterPro" id="IPR038729">
    <property type="entry name" value="Rad50/SbcC_AAA"/>
</dbReference>
<dbReference type="PANTHER" id="PTHR45916">
    <property type="entry name" value="STRUCTURAL MAINTENANCE OF CHROMOSOMES PROTEIN 5"/>
    <property type="match status" value="1"/>
</dbReference>
<dbReference type="PANTHER" id="PTHR45916:SF1">
    <property type="entry name" value="STRUCTURAL MAINTENANCE OF CHROMOSOMES PROTEIN 5"/>
    <property type="match status" value="1"/>
</dbReference>
<dbReference type="Pfam" id="PF13476">
    <property type="entry name" value="AAA_23"/>
    <property type="match status" value="1"/>
</dbReference>
<dbReference type="SUPFAM" id="SSF52540">
    <property type="entry name" value="P-loop containing nucleoside triphosphate hydrolases"/>
    <property type="match status" value="2"/>
</dbReference>
<accession>Q805A1</accession>
<gene>
    <name type="primary">smc5</name>
    <name type="synonym">smc5l1</name>
</gene>
<name>SMC5_XENLA</name>
<protein>
    <recommendedName>
        <fullName>Structural maintenance of chromosomes protein 5</fullName>
        <shortName>SMC protein 5</shortName>
        <shortName>SMC-5</shortName>
    </recommendedName>
</protein>
<proteinExistence type="evidence at transcript level"/>
<keyword id="KW-0067">ATP-binding</keyword>
<keyword id="KW-0131">Cell cycle</keyword>
<keyword id="KW-0132">Cell division</keyword>
<keyword id="KW-0158">Chromosome</keyword>
<keyword id="KW-0175">Coiled coil</keyword>
<keyword id="KW-0227">DNA damage</keyword>
<keyword id="KW-0233">DNA recombination</keyword>
<keyword id="KW-0234">DNA repair</keyword>
<keyword id="KW-0498">Mitosis</keyword>
<keyword id="KW-0547">Nucleotide-binding</keyword>
<keyword id="KW-0539">Nucleus</keyword>
<keyword id="KW-1185">Reference proteome</keyword>
<keyword id="KW-0779">Telomere</keyword>
<reference key="1">
    <citation type="journal article" date="2006" name="Biochem. Biophys. Res. Commun.">
        <title>Chromatin loading of Smc5/6 is induced by DNA replication but not by DNA double-strand breaks.</title>
        <authorList>
            <person name="Tsuyama T."/>
            <person name="Inou K."/>
            <person name="Seki M."/>
            <person name="Seki T."/>
            <person name="Kumata Y."/>
            <person name="Kobayashi T."/>
            <person name="Kimura K."/>
            <person name="Hanaoka F."/>
            <person name="Enomoto T."/>
            <person name="Tada S."/>
        </authorList>
    </citation>
    <scope>NUCLEOTIDE SEQUENCE [MRNA]</scope>
    <scope>DEVELOPMENTAL STAGE</scope>
</reference>
<feature type="chain" id="PRO_0000270955" description="Structural maintenance of chromosomes protein 5">
    <location>
        <begin position="1"/>
        <end position="1065"/>
    </location>
</feature>
<feature type="region of interest" description="Flexible hinge">
    <location>
        <begin position="438"/>
        <end position="628"/>
    </location>
</feature>
<feature type="coiled-coil region" evidence="2">
    <location>
        <begin position="210"/>
        <end position="439"/>
    </location>
</feature>
<feature type="coiled-coil region" evidence="2">
    <location>
        <begin position="629"/>
        <end position="797"/>
    </location>
</feature>
<feature type="coiled-coil region" evidence="2">
    <location>
        <begin position="855"/>
        <end position="893"/>
    </location>
</feature>
<feature type="binding site" evidence="2">
    <location>
        <begin position="58"/>
        <end position="65"/>
    </location>
    <ligand>
        <name>ATP</name>
        <dbReference type="ChEBI" id="CHEBI:30616"/>
    </ligand>
</feature>
<sequence>MESAPVKRKAXGTKLLLGRQEHHRNLVEGSIVRIKMENFLTYDQCEVFPGPYLNMIVGANGTGKSSIVCAICLGLAGKTAFIGRADKVGFYVKRGCQKGFVELELYKTSGNVIIKREIQVANNQSVWYINHKSATLKTVEEQVPALNIQVGNLCPIPATRTKFGEFANLSKIETSKKQLKNHVGTPRNVQVPLRIEELHGEKKELAGACKSKAEFLEKLNQRNERYKQDVERYYQQKRHQDKIDMLERKRPWVEYENVRQQYEDVKKSCGNFKDELKKLQGLQAPLNQKIQQIEKRQRIIDEKIKDKAIEIKETSKNCKQKQDELEQKDKQIEEVQQSLRVKRDAEQERQKKIGNIRKMIEDWEKELSAMTNQENIQPEMDSINTDFRRIQDDKANIESEMTDLRMEKDNLEREKKEKANRIKQFDNLMNLKEEKLKRMYSDTYNAVVWLKENKDRFKNRVCQPMMLEINMKDQRHAKYVENHIPMNDMKAFVFESQEDMQVFLKEVRDKQNLRVNTVCAPQEPYAEQRPKRPITDLKQYGFFSYLRELFDAPYPVMNYLCYQYKVHEVPVGTEQTRSMIEKVIKETDLRQMYTAEEKYVTKKSVYSQKLISSNVSLKGAQFLTVTVDAEERQQVVDQLKEIERKCSTIETSMEQLAERQRSLDRRDNELRLRKKTILEMKTKKRQLEQKISTKYDSLNRLEQDNLNLEEVQQQANNRIKNLNVQKAKLVKDLLELMKECTSLSIEKVELALQSTAISSEKNKIESDYKSATSQLRELKNQYDGIEAKKLHLLENCKGLLRKARQACNLGPNQAVPQDFQTAFQSLPESLDEIDAMLNEERSRASCFTGLTASVVDDYNKRTKEIQEVTEELNRKKLELEDYRKNISQVKEKWLNPLKQLIEKINDQFSSFFSSMQCVGEVDLHTEKEEEYDKYGIRIRVKFRSSTQLHELTPHHQSGGERSVSTMLYLMALQELNRCPFRVVDEINQGMDPVNERRVFEMVVKTACKENTSQYFFITPKLLQNLTYAEKMTVLFVYNGPFMLEPTKWNLKAFHRRRRRVAAVDQ</sequence>
<evidence type="ECO:0000250" key="1"/>
<evidence type="ECO:0000255" key="2"/>
<evidence type="ECO:0000269" key="3">
    <source>
    </source>
</evidence>
<evidence type="ECO:0000305" key="4"/>
<organism>
    <name type="scientific">Xenopus laevis</name>
    <name type="common">African clawed frog</name>
    <dbReference type="NCBI Taxonomy" id="8355"/>
    <lineage>
        <taxon>Eukaryota</taxon>
        <taxon>Metazoa</taxon>
        <taxon>Chordata</taxon>
        <taxon>Craniata</taxon>
        <taxon>Vertebrata</taxon>
        <taxon>Euteleostomi</taxon>
        <taxon>Amphibia</taxon>
        <taxon>Batrachia</taxon>
        <taxon>Anura</taxon>
        <taxon>Pipoidea</taxon>
        <taxon>Pipidae</taxon>
        <taxon>Xenopodinae</taxon>
        <taxon>Xenopus</taxon>
        <taxon>Xenopus</taxon>
    </lineage>
</organism>